<sequence>MQKTYLLALLVSSLASVRSLADQTRLDLGGSFDSTDSADGGSDNVMIQKSEMNEVIASSELLSLHRSLVEIKSISDNEQAVGEFLIDYLDSKNFTVEMQYVDFDDDTGKTIRSPRRFNIFAYPGNNASPGIILTSHIDTVPPFIPYSLSHPASTSLKRDDILISGRGTVDDKASVACQVIAAMDHLEKHPDIPIGLLFVVSEEVGGKGMSTFSNSRLNSGTYHTIIFGEPTEGALVAGHKGMVSFTLRVHGKPAHSGYPWLGRSAVSEIIPILAEVDRLGDIPVSQGGLPSSEKYGRTTLNIGFMSGGVASNVVAEEAVAKVAVRLAAGDPEDAKDIIFRAIRNVATKNRNDATVVLSNGHERPKGDIEIIFGLEAYGVIDLDSDVDGFNVTTVNYGTDVPHWKIYGDNVKRYLYGPGTIFVAHGKNEALTVGEMEAGLEGYKKLVAKAVERERP</sequence>
<gene>
    <name type="ORF">MCYG_07204</name>
</gene>
<feature type="signal peptide" evidence="2">
    <location>
        <begin position="1"/>
        <end position="21"/>
    </location>
</feature>
<feature type="chain" id="PRO_0000411226" description="Probable carboxypeptidase MCYG_07204">
    <location>
        <begin position="22"/>
        <end position="455"/>
    </location>
</feature>
<feature type="active site" description="Proton acceptor" evidence="1">
    <location>
        <position position="202"/>
    </location>
</feature>
<feature type="binding site" evidence="1">
    <location>
        <position position="170"/>
    </location>
    <ligand>
        <name>Zn(2+)</name>
        <dbReference type="ChEBI" id="CHEBI:29105"/>
        <label>1</label>
    </ligand>
</feature>
<feature type="binding site" evidence="1">
    <location>
        <position position="170"/>
    </location>
    <ligand>
        <name>Zn(2+)</name>
        <dbReference type="ChEBI" id="CHEBI:29105"/>
        <label>2</label>
    </ligand>
</feature>
<feature type="binding site" evidence="1">
    <location>
        <position position="203"/>
    </location>
    <ligand>
        <name>Zn(2+)</name>
        <dbReference type="ChEBI" id="CHEBI:29105"/>
        <label>1</label>
    </ligand>
</feature>
<feature type="glycosylation site" description="N-linked (GlcNAc...) asparagine" evidence="2">
    <location>
        <position position="93"/>
    </location>
</feature>
<feature type="glycosylation site" description="N-linked (GlcNAc...) asparagine" evidence="2">
    <location>
        <position position="390"/>
    </location>
</feature>
<reference key="1">
    <citation type="journal article" date="2012" name="MBio">
        <title>Comparative genome analysis of Trichophyton rubrum and related dermatophytes reveals candidate genes involved in infection.</title>
        <authorList>
            <person name="Martinez D.A."/>
            <person name="Oliver B.G."/>
            <person name="Graeser Y."/>
            <person name="Goldberg J.M."/>
            <person name="Li W."/>
            <person name="Martinez-Rossi N.M."/>
            <person name="Monod M."/>
            <person name="Shelest E."/>
            <person name="Barton R.C."/>
            <person name="Birch E."/>
            <person name="Brakhage A.A."/>
            <person name="Chen Z."/>
            <person name="Gurr S.J."/>
            <person name="Heiman D."/>
            <person name="Heitman J."/>
            <person name="Kosti I."/>
            <person name="Rossi A."/>
            <person name="Saif S."/>
            <person name="Samalova M."/>
            <person name="Saunders C.W."/>
            <person name="Shea T."/>
            <person name="Summerbell R.C."/>
            <person name="Xu J."/>
            <person name="Young S."/>
            <person name="Zeng Q."/>
            <person name="Birren B.W."/>
            <person name="Cuomo C.A."/>
            <person name="White T.C."/>
        </authorList>
    </citation>
    <scope>NUCLEOTIDE SEQUENCE [LARGE SCALE GENOMIC DNA]</scope>
    <source>
        <strain>ATCC MYA-4605 / CBS 113480</strain>
    </source>
</reference>
<protein>
    <recommendedName>
        <fullName>Probable carboxypeptidase MCYG_07204</fullName>
        <ecNumber>3.4.17.-</ecNumber>
    </recommendedName>
    <alternativeName>
        <fullName>Peptidase M20 domain-containing protein MCYG_07204</fullName>
    </alternativeName>
</protein>
<organism>
    <name type="scientific">Arthroderma otae (strain ATCC MYA-4605 / CBS 113480)</name>
    <name type="common">Microsporum canis</name>
    <dbReference type="NCBI Taxonomy" id="554155"/>
    <lineage>
        <taxon>Eukaryota</taxon>
        <taxon>Fungi</taxon>
        <taxon>Dikarya</taxon>
        <taxon>Ascomycota</taxon>
        <taxon>Pezizomycotina</taxon>
        <taxon>Eurotiomycetes</taxon>
        <taxon>Eurotiomycetidae</taxon>
        <taxon>Onygenales</taxon>
        <taxon>Arthrodermataceae</taxon>
        <taxon>Microsporum</taxon>
    </lineage>
</organism>
<name>P20D1_ARTOC</name>
<dbReference type="EC" id="3.4.17.-"/>
<dbReference type="EMBL" id="DS995707">
    <property type="protein sequence ID" value="EEQ34385.1"/>
    <property type="molecule type" value="Genomic_DNA"/>
</dbReference>
<dbReference type="RefSeq" id="XP_002843421.1">
    <property type="nucleotide sequence ID" value="XM_002843375.1"/>
</dbReference>
<dbReference type="SMR" id="C5FXY7"/>
<dbReference type="STRING" id="554155.C5FXY7"/>
<dbReference type="GeneID" id="9225495"/>
<dbReference type="VEuPathDB" id="FungiDB:MCYG_07204"/>
<dbReference type="eggNOG" id="KOG2275">
    <property type="taxonomic scope" value="Eukaryota"/>
</dbReference>
<dbReference type="HOGENOM" id="CLU_021802_3_0_1"/>
<dbReference type="OMA" id="RLHKGVM"/>
<dbReference type="OrthoDB" id="3064516at2759"/>
<dbReference type="Proteomes" id="UP000002035">
    <property type="component" value="Unassembled WGS sequence"/>
</dbReference>
<dbReference type="GO" id="GO:0005576">
    <property type="term" value="C:extracellular region"/>
    <property type="evidence" value="ECO:0007669"/>
    <property type="project" value="UniProtKB-SubCell"/>
</dbReference>
<dbReference type="GO" id="GO:0046872">
    <property type="term" value="F:metal ion binding"/>
    <property type="evidence" value="ECO:0007669"/>
    <property type="project" value="UniProtKB-KW"/>
</dbReference>
<dbReference type="GO" id="GO:0008233">
    <property type="term" value="F:peptidase activity"/>
    <property type="evidence" value="ECO:0007669"/>
    <property type="project" value="UniProtKB-KW"/>
</dbReference>
<dbReference type="GO" id="GO:0006508">
    <property type="term" value="P:proteolysis"/>
    <property type="evidence" value="ECO:0007669"/>
    <property type="project" value="UniProtKB-KW"/>
</dbReference>
<dbReference type="CDD" id="cd05652">
    <property type="entry name" value="M20_ArgE_DapE-like_fungal"/>
    <property type="match status" value="1"/>
</dbReference>
<dbReference type="Gene3D" id="3.30.70.360">
    <property type="match status" value="1"/>
</dbReference>
<dbReference type="Gene3D" id="3.40.630.10">
    <property type="entry name" value="Zn peptidases"/>
    <property type="match status" value="1"/>
</dbReference>
<dbReference type="InterPro" id="IPR036264">
    <property type="entry name" value="Bact_exopeptidase_dim_dom"/>
</dbReference>
<dbReference type="InterPro" id="IPR002933">
    <property type="entry name" value="Peptidase_M20"/>
</dbReference>
<dbReference type="InterPro" id="IPR011650">
    <property type="entry name" value="Peptidase_M20_dimer"/>
</dbReference>
<dbReference type="InterPro" id="IPR050072">
    <property type="entry name" value="Peptidase_M20A"/>
</dbReference>
<dbReference type="PANTHER" id="PTHR43808">
    <property type="entry name" value="ACETYLORNITHINE DEACETYLASE"/>
    <property type="match status" value="1"/>
</dbReference>
<dbReference type="PANTHER" id="PTHR43808:SF8">
    <property type="entry name" value="PEPTIDASE M20 DIMERISATION DOMAIN-CONTAINING PROTEIN"/>
    <property type="match status" value="1"/>
</dbReference>
<dbReference type="Pfam" id="PF07687">
    <property type="entry name" value="M20_dimer"/>
    <property type="match status" value="1"/>
</dbReference>
<dbReference type="Pfam" id="PF01546">
    <property type="entry name" value="Peptidase_M20"/>
    <property type="match status" value="1"/>
</dbReference>
<dbReference type="SUPFAM" id="SSF55031">
    <property type="entry name" value="Bacterial exopeptidase dimerisation domain"/>
    <property type="match status" value="1"/>
</dbReference>
<dbReference type="SUPFAM" id="SSF53187">
    <property type="entry name" value="Zn-dependent exopeptidases"/>
    <property type="match status" value="1"/>
</dbReference>
<comment type="cofactor">
    <cofactor evidence="1">
        <name>Zn(2+)</name>
        <dbReference type="ChEBI" id="CHEBI:29105"/>
    </cofactor>
    <text evidence="1">Binds 2 Zn(2+) ions per subunit.</text>
</comment>
<comment type="subcellular location">
    <subcellularLocation>
        <location evidence="3">Secreted</location>
    </subcellularLocation>
</comment>
<comment type="similarity">
    <text evidence="3">Belongs to the peptidase M20A family.</text>
</comment>
<proteinExistence type="inferred from homology"/>
<accession>C5FXY7</accession>
<keyword id="KW-0325">Glycoprotein</keyword>
<keyword id="KW-0378">Hydrolase</keyword>
<keyword id="KW-0479">Metal-binding</keyword>
<keyword id="KW-0645">Protease</keyword>
<keyword id="KW-1185">Reference proteome</keyword>
<keyword id="KW-0964">Secreted</keyword>
<keyword id="KW-0732">Signal</keyword>
<keyword id="KW-0862">Zinc</keyword>
<evidence type="ECO:0000250" key="1"/>
<evidence type="ECO:0000255" key="2"/>
<evidence type="ECO:0000305" key="3"/>